<organism>
    <name type="scientific">Zea mays</name>
    <name type="common">Maize</name>
    <dbReference type="NCBI Taxonomy" id="4577"/>
    <lineage>
        <taxon>Eukaryota</taxon>
        <taxon>Viridiplantae</taxon>
        <taxon>Streptophyta</taxon>
        <taxon>Embryophyta</taxon>
        <taxon>Tracheophyta</taxon>
        <taxon>Spermatophyta</taxon>
        <taxon>Magnoliopsida</taxon>
        <taxon>Liliopsida</taxon>
        <taxon>Poales</taxon>
        <taxon>Poaceae</taxon>
        <taxon>PACMAD clade</taxon>
        <taxon>Panicoideae</taxon>
        <taxon>Andropogonodae</taxon>
        <taxon>Andropogoneae</taxon>
        <taxon>Tripsacinae</taxon>
        <taxon>Zea</taxon>
    </lineage>
</organism>
<feature type="chain" id="PRO_0000058692" description="14-3-3-like protein GF14-12">
    <location>
        <begin position="1"/>
        <end position="261"/>
    </location>
</feature>
<protein>
    <recommendedName>
        <fullName>14-3-3-like protein GF14-12</fullName>
    </recommendedName>
</protein>
<keyword id="KW-1185">Reference proteome</keyword>
<proteinExistence type="evidence at transcript level"/>
<gene>
    <name type="primary">GRF2</name>
</gene>
<comment type="function">
    <text>Is associated with a DNA binding complex to bind to the G box, a well-characterized cis-acting DNA regulatory element found in plant genes.</text>
</comment>
<comment type="similarity">
    <text evidence="1">Belongs to the 14-3-3 family.</text>
</comment>
<accession>Q01526</accession>
<dbReference type="EMBL" id="S77135">
    <property type="status" value="NOT_ANNOTATED_CDS"/>
    <property type="molecule type" value="Genomic_DNA"/>
</dbReference>
<dbReference type="EMBL" id="M96856">
    <property type="protein sequence ID" value="AAA33505.1"/>
    <property type="molecule type" value="mRNA"/>
</dbReference>
<dbReference type="PIR" id="JQ1680">
    <property type="entry name" value="JQ1680"/>
</dbReference>
<dbReference type="RefSeq" id="NP_001160169.1">
    <property type="nucleotide sequence ID" value="NM_001166697.1"/>
</dbReference>
<dbReference type="SMR" id="Q01526"/>
<dbReference type="FunCoup" id="Q01526">
    <property type="interactions" value="3010"/>
</dbReference>
<dbReference type="STRING" id="4577.Q01526"/>
<dbReference type="GeneID" id="100279512"/>
<dbReference type="KEGG" id="zma:100279512"/>
<dbReference type="MaizeGDB" id="65832"/>
<dbReference type="InParanoid" id="Q01526"/>
<dbReference type="OrthoDB" id="10260625at2759"/>
<dbReference type="Proteomes" id="UP000007305">
    <property type="component" value="Unplaced"/>
</dbReference>
<dbReference type="ExpressionAtlas" id="Q01526">
    <property type="expression patterns" value="baseline and differential"/>
</dbReference>
<dbReference type="GO" id="GO:0005737">
    <property type="term" value="C:cytoplasm"/>
    <property type="evidence" value="ECO:0000318"/>
    <property type="project" value="GO_Central"/>
</dbReference>
<dbReference type="GO" id="GO:0005634">
    <property type="term" value="C:nucleus"/>
    <property type="evidence" value="ECO:0000304"/>
    <property type="project" value="AgBase"/>
</dbReference>
<dbReference type="GO" id="GO:0003677">
    <property type="term" value="F:DNA binding"/>
    <property type="evidence" value="ECO:0000314"/>
    <property type="project" value="AgBase"/>
</dbReference>
<dbReference type="GO" id="GO:0044877">
    <property type="term" value="F:protein-containing complex binding"/>
    <property type="evidence" value="ECO:0000314"/>
    <property type="project" value="AgBase"/>
</dbReference>
<dbReference type="GO" id="GO:0008104">
    <property type="term" value="P:protein localization"/>
    <property type="evidence" value="ECO:0000318"/>
    <property type="project" value="GO_Central"/>
</dbReference>
<dbReference type="GO" id="GO:0010468">
    <property type="term" value="P:regulation of gene expression"/>
    <property type="evidence" value="ECO:0000304"/>
    <property type="project" value="AgBase"/>
</dbReference>
<dbReference type="GO" id="GO:0007165">
    <property type="term" value="P:signal transduction"/>
    <property type="evidence" value="ECO:0000318"/>
    <property type="project" value="GO_Central"/>
</dbReference>
<dbReference type="FunFam" id="1.20.190.20:FF:000002">
    <property type="entry name" value="14-3-3 protein epsilon"/>
    <property type="match status" value="1"/>
</dbReference>
<dbReference type="Gene3D" id="1.20.190.20">
    <property type="entry name" value="14-3-3 domain"/>
    <property type="match status" value="1"/>
</dbReference>
<dbReference type="InterPro" id="IPR000308">
    <property type="entry name" value="14-3-3"/>
</dbReference>
<dbReference type="InterPro" id="IPR023409">
    <property type="entry name" value="14-3-3_CS"/>
</dbReference>
<dbReference type="InterPro" id="IPR036815">
    <property type="entry name" value="14-3-3_dom_sf"/>
</dbReference>
<dbReference type="InterPro" id="IPR023410">
    <property type="entry name" value="14-3-3_domain"/>
</dbReference>
<dbReference type="PANTHER" id="PTHR18860">
    <property type="entry name" value="14-3-3 PROTEIN"/>
    <property type="match status" value="1"/>
</dbReference>
<dbReference type="Pfam" id="PF00244">
    <property type="entry name" value="14-3-3"/>
    <property type="match status" value="1"/>
</dbReference>
<dbReference type="PIRSF" id="PIRSF000868">
    <property type="entry name" value="14-3-3"/>
    <property type="match status" value="1"/>
</dbReference>
<dbReference type="PRINTS" id="PR00305">
    <property type="entry name" value="1433ZETA"/>
</dbReference>
<dbReference type="SMART" id="SM00101">
    <property type="entry name" value="14_3_3"/>
    <property type="match status" value="1"/>
</dbReference>
<dbReference type="SUPFAM" id="SSF48445">
    <property type="entry name" value="14-3-3 protein"/>
    <property type="match status" value="1"/>
</dbReference>
<dbReference type="PROSITE" id="PS00796">
    <property type="entry name" value="1433_1"/>
    <property type="match status" value="1"/>
</dbReference>
<dbReference type="PROSITE" id="PS00797">
    <property type="entry name" value="1433_2"/>
    <property type="match status" value="1"/>
</dbReference>
<evidence type="ECO:0000305" key="1"/>
<name>14332_MAIZE</name>
<reference key="1">
    <citation type="journal article" date="1994" name="Plant Physiol.">
        <title>Two genes encoding GF14 (14-3-3) proteins in Zea mays. Structure, expression, and potential regulation by the G-box binding complex.</title>
        <authorList>
            <person name="de Vetten N.C."/>
            <person name="Ferl R.J."/>
        </authorList>
    </citation>
    <scope>NUCLEOTIDE SEQUENCE [GENOMIC DNA]</scope>
</reference>
<reference key="2">
    <citation type="journal article" date="1992" name="Plant Cell">
        <title>A maize protein associated with the G-box binding complex has homology to brain regulatory proteins.</title>
        <authorList>
            <person name="de Vetten N.C."/>
            <person name="Lu G."/>
            <person name="Ferl R.J."/>
        </authorList>
    </citation>
    <scope>NUCLEOTIDE SEQUENCE [MRNA] OF 14-261</scope>
</reference>
<sequence length="261" mass="29636">MASAELSREENVYMAKLAEQAERYEEMVEFMEKVAKTVDSEELTVEERNLLSVAYKNVIGARRASWRIISSIEQKEEGRGNEDRVTLIKDYRGKIETELTKICDGILKLLESHLVPSSTAPESKVFYLKMKGDYYRYLAEFKTGAERKDAAENTMVAYKAAQDIALAELAPTHPIRLGLALNFSVFYYEILNSPDRACSLAKQAFDEAISELDTLSEESYKDSTLIMQLLHDNLTLWTSDISEDPAEEIREAPKHDLSEGQ</sequence>